<comment type="function">
    <text evidence="2">With S4 and S5 plays an important role in translational accuracy.</text>
</comment>
<comment type="function">
    <text evidence="2">Interacts with and stabilizes bases of the 16S rRNA that are involved in tRNA selection in the A site and with the mRNA backbone. Located at the interface of the 30S and 50S subunits, it traverses the body of the 30S subunit contacting proteins on the other side and probably holding the rRNA structure together. The combined cluster of proteins S8, S12 and S17 appears to hold together the shoulder and platform of the 30S subunit.</text>
</comment>
<comment type="subunit">
    <text evidence="2">Part of the 30S ribosomal subunit. Contacts proteins S8 and S17. May interact with IF1 in the 30S initiation complex.</text>
</comment>
<comment type="similarity">
    <text evidence="2">Belongs to the universal ribosomal protein uS12 family.</text>
</comment>
<reference key="1">
    <citation type="journal article" date="2005" name="Nat. Biotechnol.">
        <title>The complete genome sequence of the meat-borne lactic acid bacterium Lactobacillus sakei 23K.</title>
        <authorList>
            <person name="Chaillou S."/>
            <person name="Champomier-Verges M.-C."/>
            <person name="Cornet M."/>
            <person name="Crutz-Le Coq A.-M."/>
            <person name="Dudez A.-M."/>
            <person name="Martin V."/>
            <person name="Beaufils S."/>
            <person name="Darbon-Rongere E."/>
            <person name="Bossy R."/>
            <person name="Loux V."/>
            <person name="Zagorec M."/>
        </authorList>
    </citation>
    <scope>NUCLEOTIDE SEQUENCE [LARGE SCALE GENOMIC DNA]</scope>
    <source>
        <strain>23K</strain>
    </source>
</reference>
<gene>
    <name evidence="2" type="primary">rpsL</name>
    <name type="ordered locus">LCA_1770</name>
</gene>
<evidence type="ECO:0000250" key="1"/>
<evidence type="ECO:0000255" key="2">
    <source>
        <dbReference type="HAMAP-Rule" id="MF_00403"/>
    </source>
</evidence>
<evidence type="ECO:0000256" key="3">
    <source>
        <dbReference type="SAM" id="MobiDB-lite"/>
    </source>
</evidence>
<evidence type="ECO:0000305" key="4"/>
<accession>Q38UQ7</accession>
<feature type="chain" id="PRO_0000226393" description="Small ribosomal subunit protein uS12">
    <location>
        <begin position="1"/>
        <end position="137"/>
    </location>
</feature>
<feature type="region of interest" description="Disordered" evidence="3">
    <location>
        <begin position="1"/>
        <end position="44"/>
    </location>
</feature>
<feature type="modified residue" description="3-methylthioaspartic acid" evidence="1">
    <location>
        <position position="102"/>
    </location>
</feature>
<proteinExistence type="inferred from homology"/>
<sequence>MPTINQLVRKGRKSRTSKSDAPALNFGYNSMKKKATDNPAPQKRGVATRVGTMTPKKPNSALRKYARVRLSNLIEVTAYIPGIGHNLQEHSVVLIRGGRVKDLPGVRYHVIRGALDTAGVDGRMQSRSKYGTKRPKK</sequence>
<organism>
    <name type="scientific">Latilactobacillus sakei subsp. sakei (strain 23K)</name>
    <name type="common">Lactobacillus sakei subsp. sakei</name>
    <dbReference type="NCBI Taxonomy" id="314315"/>
    <lineage>
        <taxon>Bacteria</taxon>
        <taxon>Bacillati</taxon>
        <taxon>Bacillota</taxon>
        <taxon>Bacilli</taxon>
        <taxon>Lactobacillales</taxon>
        <taxon>Lactobacillaceae</taxon>
        <taxon>Latilactobacillus</taxon>
    </lineage>
</organism>
<name>RS12_LATSS</name>
<keyword id="KW-0488">Methylation</keyword>
<keyword id="KW-1185">Reference proteome</keyword>
<keyword id="KW-0687">Ribonucleoprotein</keyword>
<keyword id="KW-0689">Ribosomal protein</keyword>
<keyword id="KW-0694">RNA-binding</keyword>
<keyword id="KW-0699">rRNA-binding</keyword>
<keyword id="KW-0820">tRNA-binding</keyword>
<protein>
    <recommendedName>
        <fullName evidence="2">Small ribosomal subunit protein uS12</fullName>
    </recommendedName>
    <alternativeName>
        <fullName evidence="4">30S ribosomal protein S12</fullName>
    </alternativeName>
</protein>
<dbReference type="EMBL" id="CR936503">
    <property type="protein sequence ID" value="CAI56078.1"/>
    <property type="molecule type" value="Genomic_DNA"/>
</dbReference>
<dbReference type="RefSeq" id="WP_004270179.1">
    <property type="nucleotide sequence ID" value="NC_007576.1"/>
</dbReference>
<dbReference type="SMR" id="Q38UQ7"/>
<dbReference type="STRING" id="314315.LCA_1770"/>
<dbReference type="GeneID" id="57132686"/>
<dbReference type="KEGG" id="lsa:LCA_1770"/>
<dbReference type="eggNOG" id="COG0048">
    <property type="taxonomic scope" value="Bacteria"/>
</dbReference>
<dbReference type="HOGENOM" id="CLU_104295_1_1_9"/>
<dbReference type="OrthoDB" id="9802366at2"/>
<dbReference type="Proteomes" id="UP000002707">
    <property type="component" value="Chromosome"/>
</dbReference>
<dbReference type="GO" id="GO:0015935">
    <property type="term" value="C:small ribosomal subunit"/>
    <property type="evidence" value="ECO:0007669"/>
    <property type="project" value="InterPro"/>
</dbReference>
<dbReference type="GO" id="GO:0019843">
    <property type="term" value="F:rRNA binding"/>
    <property type="evidence" value="ECO:0007669"/>
    <property type="project" value="UniProtKB-UniRule"/>
</dbReference>
<dbReference type="GO" id="GO:0003735">
    <property type="term" value="F:structural constituent of ribosome"/>
    <property type="evidence" value="ECO:0007669"/>
    <property type="project" value="InterPro"/>
</dbReference>
<dbReference type="GO" id="GO:0000049">
    <property type="term" value="F:tRNA binding"/>
    <property type="evidence" value="ECO:0007669"/>
    <property type="project" value="UniProtKB-UniRule"/>
</dbReference>
<dbReference type="GO" id="GO:0006412">
    <property type="term" value="P:translation"/>
    <property type="evidence" value="ECO:0007669"/>
    <property type="project" value="UniProtKB-UniRule"/>
</dbReference>
<dbReference type="CDD" id="cd03368">
    <property type="entry name" value="Ribosomal_S12"/>
    <property type="match status" value="1"/>
</dbReference>
<dbReference type="FunFam" id="2.40.50.140:FF:000001">
    <property type="entry name" value="30S ribosomal protein S12"/>
    <property type="match status" value="1"/>
</dbReference>
<dbReference type="Gene3D" id="2.40.50.140">
    <property type="entry name" value="Nucleic acid-binding proteins"/>
    <property type="match status" value="1"/>
</dbReference>
<dbReference type="HAMAP" id="MF_00403_B">
    <property type="entry name" value="Ribosomal_uS12_B"/>
    <property type="match status" value="1"/>
</dbReference>
<dbReference type="InterPro" id="IPR012340">
    <property type="entry name" value="NA-bd_OB-fold"/>
</dbReference>
<dbReference type="InterPro" id="IPR006032">
    <property type="entry name" value="Ribosomal_uS12"/>
</dbReference>
<dbReference type="InterPro" id="IPR005679">
    <property type="entry name" value="Ribosomal_uS12_bac"/>
</dbReference>
<dbReference type="NCBIfam" id="TIGR00981">
    <property type="entry name" value="rpsL_bact"/>
    <property type="match status" value="1"/>
</dbReference>
<dbReference type="PANTHER" id="PTHR11652">
    <property type="entry name" value="30S RIBOSOMAL PROTEIN S12 FAMILY MEMBER"/>
    <property type="match status" value="1"/>
</dbReference>
<dbReference type="Pfam" id="PF00164">
    <property type="entry name" value="Ribosom_S12_S23"/>
    <property type="match status" value="1"/>
</dbReference>
<dbReference type="PRINTS" id="PR01034">
    <property type="entry name" value="RIBOSOMALS12"/>
</dbReference>
<dbReference type="SUPFAM" id="SSF50249">
    <property type="entry name" value="Nucleic acid-binding proteins"/>
    <property type="match status" value="1"/>
</dbReference>
<dbReference type="PROSITE" id="PS00055">
    <property type="entry name" value="RIBOSOMAL_S12"/>
    <property type="match status" value="1"/>
</dbReference>